<proteinExistence type="inferred from homology"/>
<keyword id="KW-0067">ATP-binding</keyword>
<keyword id="KW-0436">Ligase</keyword>
<keyword id="KW-0547">Nucleotide-binding</keyword>
<keyword id="KW-0658">Purine biosynthesis</keyword>
<keyword id="KW-1185">Reference proteome</keyword>
<evidence type="ECO:0000255" key="1">
    <source>
        <dbReference type="HAMAP-Rule" id="MF_00137"/>
    </source>
</evidence>
<gene>
    <name evidence="1" type="primary">purC</name>
    <name type="ordered locus">HCH_04904</name>
</gene>
<reference key="1">
    <citation type="journal article" date="2005" name="Nucleic Acids Res.">
        <title>Genomic blueprint of Hahella chejuensis, a marine microbe producing an algicidal agent.</title>
        <authorList>
            <person name="Jeong H."/>
            <person name="Yim J.H."/>
            <person name="Lee C."/>
            <person name="Choi S.-H."/>
            <person name="Park Y.K."/>
            <person name="Yoon S.H."/>
            <person name="Hur C.-G."/>
            <person name="Kang H.-Y."/>
            <person name="Kim D."/>
            <person name="Lee H.H."/>
            <person name="Park K.H."/>
            <person name="Park S.-H."/>
            <person name="Park H.-S."/>
            <person name="Lee H.K."/>
            <person name="Oh T.K."/>
            <person name="Kim J.F."/>
        </authorList>
    </citation>
    <scope>NUCLEOTIDE SEQUENCE [LARGE SCALE GENOMIC DNA]</scope>
    <source>
        <strain>KCTC 2396</strain>
    </source>
</reference>
<dbReference type="EC" id="6.3.2.6" evidence="1"/>
<dbReference type="EMBL" id="CP000155">
    <property type="protein sequence ID" value="ABC31595.1"/>
    <property type="molecule type" value="Genomic_DNA"/>
</dbReference>
<dbReference type="RefSeq" id="WP_011398660.1">
    <property type="nucleotide sequence ID" value="NC_007645.1"/>
</dbReference>
<dbReference type="SMR" id="Q2SCM9"/>
<dbReference type="STRING" id="349521.HCH_04904"/>
<dbReference type="KEGG" id="hch:HCH_04904"/>
<dbReference type="eggNOG" id="COG0152">
    <property type="taxonomic scope" value="Bacteria"/>
</dbReference>
<dbReference type="HOGENOM" id="CLU_061495_2_0_6"/>
<dbReference type="OrthoDB" id="9801549at2"/>
<dbReference type="UniPathway" id="UPA00074">
    <property type="reaction ID" value="UER00131"/>
</dbReference>
<dbReference type="Proteomes" id="UP000000238">
    <property type="component" value="Chromosome"/>
</dbReference>
<dbReference type="GO" id="GO:0005829">
    <property type="term" value="C:cytosol"/>
    <property type="evidence" value="ECO:0007669"/>
    <property type="project" value="TreeGrafter"/>
</dbReference>
<dbReference type="GO" id="GO:0005524">
    <property type="term" value="F:ATP binding"/>
    <property type="evidence" value="ECO:0007669"/>
    <property type="project" value="UniProtKB-KW"/>
</dbReference>
<dbReference type="GO" id="GO:0004639">
    <property type="term" value="F:phosphoribosylaminoimidazolesuccinocarboxamide synthase activity"/>
    <property type="evidence" value="ECO:0007669"/>
    <property type="project" value="UniProtKB-UniRule"/>
</dbReference>
<dbReference type="GO" id="GO:0006189">
    <property type="term" value="P:'de novo' IMP biosynthetic process"/>
    <property type="evidence" value="ECO:0007669"/>
    <property type="project" value="UniProtKB-UniRule"/>
</dbReference>
<dbReference type="GO" id="GO:0009236">
    <property type="term" value="P:cobalamin biosynthetic process"/>
    <property type="evidence" value="ECO:0007669"/>
    <property type="project" value="InterPro"/>
</dbReference>
<dbReference type="CDD" id="cd01415">
    <property type="entry name" value="SAICAR_synt_PurC"/>
    <property type="match status" value="1"/>
</dbReference>
<dbReference type="FunFam" id="3.30.200.20:FF:000086">
    <property type="entry name" value="Phosphoribosylaminoimidazole-succinocarboxamide synthase"/>
    <property type="match status" value="1"/>
</dbReference>
<dbReference type="FunFam" id="3.30.470.20:FF:000006">
    <property type="entry name" value="Phosphoribosylaminoimidazole-succinocarboxamide synthase"/>
    <property type="match status" value="1"/>
</dbReference>
<dbReference type="Gene3D" id="3.30.470.20">
    <property type="entry name" value="ATP-grasp fold, B domain"/>
    <property type="match status" value="1"/>
</dbReference>
<dbReference type="Gene3D" id="3.30.200.20">
    <property type="entry name" value="Phosphorylase Kinase, domain 1"/>
    <property type="match status" value="1"/>
</dbReference>
<dbReference type="HAMAP" id="MF_00137">
    <property type="entry name" value="SAICAR_synth"/>
    <property type="match status" value="1"/>
</dbReference>
<dbReference type="InterPro" id="IPR028923">
    <property type="entry name" value="SAICAR_synt/ADE2_N"/>
</dbReference>
<dbReference type="InterPro" id="IPR033934">
    <property type="entry name" value="SAICAR_synt_PurC"/>
</dbReference>
<dbReference type="InterPro" id="IPR001636">
    <property type="entry name" value="SAICAR_synth"/>
</dbReference>
<dbReference type="InterPro" id="IPR050089">
    <property type="entry name" value="SAICAR_synthetase"/>
</dbReference>
<dbReference type="InterPro" id="IPR018236">
    <property type="entry name" value="SAICAR_synthetase_CS"/>
</dbReference>
<dbReference type="NCBIfam" id="TIGR00081">
    <property type="entry name" value="purC"/>
    <property type="match status" value="1"/>
</dbReference>
<dbReference type="PANTHER" id="PTHR43599">
    <property type="entry name" value="MULTIFUNCTIONAL PROTEIN ADE2"/>
    <property type="match status" value="1"/>
</dbReference>
<dbReference type="PANTHER" id="PTHR43599:SF3">
    <property type="entry name" value="SI:DKEY-6E2.2"/>
    <property type="match status" value="1"/>
</dbReference>
<dbReference type="Pfam" id="PF01259">
    <property type="entry name" value="SAICAR_synt"/>
    <property type="match status" value="1"/>
</dbReference>
<dbReference type="SUPFAM" id="SSF56104">
    <property type="entry name" value="SAICAR synthase-like"/>
    <property type="match status" value="1"/>
</dbReference>
<dbReference type="PROSITE" id="PS01057">
    <property type="entry name" value="SAICAR_SYNTHETASE_1"/>
    <property type="match status" value="1"/>
</dbReference>
<dbReference type="PROSITE" id="PS01058">
    <property type="entry name" value="SAICAR_SYNTHETASE_2"/>
    <property type="match status" value="1"/>
</dbReference>
<sequence length="236" mass="26826">MQKLEELYSGKAKSIFKTDDADLFVMEFRDDTSAFDGVKKAKLSRKGEVNNKFNAFIMSKLAEAGVPVHFVRLLSERESLVKRLQMIPVECVVRNVAAGSLCRRLGVREGMVLTPPTYELFLKNDELHDPMINEHHARAFGWATDAQLEEMKALTFKVNDILKALFDAAGMTLVDYKLEFGLIDGKVTLGDEFSPDGCRIWDKATGEKMDKDRFRQDLGDVIEYYEEVGRRLGVQF</sequence>
<protein>
    <recommendedName>
        <fullName evidence="1">Phosphoribosylaminoimidazole-succinocarboxamide synthase</fullName>
        <ecNumber evidence="1">6.3.2.6</ecNumber>
    </recommendedName>
    <alternativeName>
        <fullName evidence="1">SAICAR synthetase</fullName>
    </alternativeName>
</protein>
<accession>Q2SCM9</accession>
<feature type="chain" id="PRO_1000018712" description="Phosphoribosylaminoimidazole-succinocarboxamide synthase">
    <location>
        <begin position="1"/>
        <end position="236"/>
    </location>
</feature>
<comment type="catalytic activity">
    <reaction evidence="1">
        <text>5-amino-1-(5-phospho-D-ribosyl)imidazole-4-carboxylate + L-aspartate + ATP = (2S)-2-[5-amino-1-(5-phospho-beta-D-ribosyl)imidazole-4-carboxamido]succinate + ADP + phosphate + 2 H(+)</text>
        <dbReference type="Rhea" id="RHEA:22628"/>
        <dbReference type="ChEBI" id="CHEBI:15378"/>
        <dbReference type="ChEBI" id="CHEBI:29991"/>
        <dbReference type="ChEBI" id="CHEBI:30616"/>
        <dbReference type="ChEBI" id="CHEBI:43474"/>
        <dbReference type="ChEBI" id="CHEBI:58443"/>
        <dbReference type="ChEBI" id="CHEBI:77657"/>
        <dbReference type="ChEBI" id="CHEBI:456216"/>
        <dbReference type="EC" id="6.3.2.6"/>
    </reaction>
</comment>
<comment type="pathway">
    <text evidence="1">Purine metabolism; IMP biosynthesis via de novo pathway; 5-amino-1-(5-phospho-D-ribosyl)imidazole-4-carboxamide from 5-amino-1-(5-phospho-D-ribosyl)imidazole-4-carboxylate: step 1/2.</text>
</comment>
<comment type="similarity">
    <text evidence="1">Belongs to the SAICAR synthetase family.</text>
</comment>
<organism>
    <name type="scientific">Hahella chejuensis (strain KCTC 2396)</name>
    <dbReference type="NCBI Taxonomy" id="349521"/>
    <lineage>
        <taxon>Bacteria</taxon>
        <taxon>Pseudomonadati</taxon>
        <taxon>Pseudomonadota</taxon>
        <taxon>Gammaproteobacteria</taxon>
        <taxon>Oceanospirillales</taxon>
        <taxon>Hahellaceae</taxon>
        <taxon>Hahella</taxon>
    </lineage>
</organism>
<name>PUR7_HAHCH</name>